<comment type="catalytic activity">
    <reaction evidence="1">
        <text>(S)-2,3,4,5-tetrahydrodipicolinate + succinyl-CoA + H2O = (S)-2-succinylamino-6-oxoheptanedioate + CoA</text>
        <dbReference type="Rhea" id="RHEA:17325"/>
        <dbReference type="ChEBI" id="CHEBI:15377"/>
        <dbReference type="ChEBI" id="CHEBI:15685"/>
        <dbReference type="ChEBI" id="CHEBI:16845"/>
        <dbReference type="ChEBI" id="CHEBI:57287"/>
        <dbReference type="ChEBI" id="CHEBI:57292"/>
        <dbReference type="EC" id="2.3.1.117"/>
    </reaction>
</comment>
<comment type="pathway">
    <text evidence="1">Amino-acid biosynthesis; L-lysine biosynthesis via DAP pathway; LL-2,6-diaminopimelate from (S)-tetrahydrodipicolinate (succinylase route): step 1/3.</text>
</comment>
<comment type="subunit">
    <text evidence="1">Homotrimer.</text>
</comment>
<comment type="subcellular location">
    <subcellularLocation>
        <location evidence="1">Cytoplasm</location>
    </subcellularLocation>
</comment>
<comment type="similarity">
    <text evidence="1">Belongs to the transferase hexapeptide repeat family.</text>
</comment>
<protein>
    <recommendedName>
        <fullName evidence="1">2,3,4,5-tetrahydropyridine-2,6-dicarboxylate N-succinyltransferase</fullName>
        <ecNumber evidence="1">2.3.1.117</ecNumber>
    </recommendedName>
    <alternativeName>
        <fullName evidence="1">Tetrahydrodipicolinate N-succinyltransferase</fullName>
        <shortName evidence="1">THDP succinyltransferase</shortName>
        <shortName evidence="1">THP succinyltransferase</shortName>
        <shortName evidence="1">Tetrahydropicolinate succinylase</shortName>
    </alternativeName>
</protein>
<keyword id="KW-0012">Acyltransferase</keyword>
<keyword id="KW-0028">Amino-acid biosynthesis</keyword>
<keyword id="KW-0963">Cytoplasm</keyword>
<keyword id="KW-0220">Diaminopimelate biosynthesis</keyword>
<keyword id="KW-0457">Lysine biosynthesis</keyword>
<keyword id="KW-1185">Reference proteome</keyword>
<keyword id="KW-0677">Repeat</keyword>
<keyword id="KW-0808">Transferase</keyword>
<feature type="chain" id="PRO_1000047146" description="2,3,4,5-tetrahydropyridine-2,6-dicarboxylate N-succinyltransferase">
    <location>
        <begin position="1"/>
        <end position="275"/>
    </location>
</feature>
<feature type="binding site" evidence="1">
    <location>
        <position position="108"/>
    </location>
    <ligand>
        <name>substrate</name>
    </ligand>
</feature>
<feature type="binding site" evidence="1">
    <location>
        <position position="145"/>
    </location>
    <ligand>
        <name>substrate</name>
    </ligand>
</feature>
<sequence length="275" mass="29258">MSNAQLETAIEAAWEARDTITPATMGETREAIEDTLAALDGGTLRVAEKQDSGDWHVNQWAKKAVLLGFRLKDMEMQGGSAQGGSWWDKVDSKWATWGDNEWGAAGFRAVPNCVVRKSAYIAPGVVLMPSFVNLGAYVDSGTMVDTWATVGSCAQIGKNVHLSGGVGIGGVLEPMQAGPTIIEDNCFIGARSEVVEGCIVREGSVLGMGVFIGQSTKIVDRETGDVMYGEVPSGSVVVAGSLPSKNGVNLYCAVIVKRVDERTRSKTSINELLRD</sequence>
<gene>
    <name evidence="1" type="primary">dapD</name>
    <name type="ordered locus">Jann_0349</name>
</gene>
<accession>Q28VJ6</accession>
<dbReference type="EC" id="2.3.1.117" evidence="1"/>
<dbReference type="EMBL" id="CP000264">
    <property type="protein sequence ID" value="ABD53266.1"/>
    <property type="molecule type" value="Genomic_DNA"/>
</dbReference>
<dbReference type="RefSeq" id="WP_011453475.1">
    <property type="nucleotide sequence ID" value="NC_007802.1"/>
</dbReference>
<dbReference type="SMR" id="Q28VJ6"/>
<dbReference type="STRING" id="290400.Jann_0349"/>
<dbReference type="KEGG" id="jan:Jann_0349"/>
<dbReference type="eggNOG" id="COG2171">
    <property type="taxonomic scope" value="Bacteria"/>
</dbReference>
<dbReference type="HOGENOM" id="CLU_050859_0_1_5"/>
<dbReference type="OrthoDB" id="9775362at2"/>
<dbReference type="UniPathway" id="UPA00034">
    <property type="reaction ID" value="UER00019"/>
</dbReference>
<dbReference type="Proteomes" id="UP000008326">
    <property type="component" value="Chromosome"/>
</dbReference>
<dbReference type="GO" id="GO:0005737">
    <property type="term" value="C:cytoplasm"/>
    <property type="evidence" value="ECO:0007669"/>
    <property type="project" value="UniProtKB-SubCell"/>
</dbReference>
<dbReference type="GO" id="GO:0008666">
    <property type="term" value="F:2,3,4,5-tetrahydropyridine-2,6-dicarboxylate N-succinyltransferase activity"/>
    <property type="evidence" value="ECO:0007669"/>
    <property type="project" value="UniProtKB-UniRule"/>
</dbReference>
<dbReference type="GO" id="GO:0016779">
    <property type="term" value="F:nucleotidyltransferase activity"/>
    <property type="evidence" value="ECO:0007669"/>
    <property type="project" value="TreeGrafter"/>
</dbReference>
<dbReference type="GO" id="GO:0019877">
    <property type="term" value="P:diaminopimelate biosynthetic process"/>
    <property type="evidence" value="ECO:0007669"/>
    <property type="project" value="UniProtKB-UniRule"/>
</dbReference>
<dbReference type="GO" id="GO:0009089">
    <property type="term" value="P:lysine biosynthetic process via diaminopimelate"/>
    <property type="evidence" value="ECO:0007669"/>
    <property type="project" value="UniProtKB-UniRule"/>
</dbReference>
<dbReference type="CDD" id="cd03350">
    <property type="entry name" value="LbH_THP_succinylT"/>
    <property type="match status" value="1"/>
</dbReference>
<dbReference type="Gene3D" id="2.160.10.10">
    <property type="entry name" value="Hexapeptide repeat proteins"/>
    <property type="match status" value="1"/>
</dbReference>
<dbReference type="Gene3D" id="1.10.166.10">
    <property type="entry name" value="Tetrahydrodipicolinate-N-succinyltransferase, N-terminal domain"/>
    <property type="match status" value="1"/>
</dbReference>
<dbReference type="HAMAP" id="MF_00811">
    <property type="entry name" value="DapD"/>
    <property type="match status" value="1"/>
</dbReference>
<dbReference type="InterPro" id="IPR005664">
    <property type="entry name" value="DapD_Trfase_Hexpep_rpt_fam"/>
</dbReference>
<dbReference type="InterPro" id="IPR001451">
    <property type="entry name" value="Hexapep"/>
</dbReference>
<dbReference type="InterPro" id="IPR018357">
    <property type="entry name" value="Hexapep_transf_CS"/>
</dbReference>
<dbReference type="InterPro" id="IPR023180">
    <property type="entry name" value="THP_succinylTrfase_dom1"/>
</dbReference>
<dbReference type="InterPro" id="IPR037133">
    <property type="entry name" value="THP_succinylTrfase_N_sf"/>
</dbReference>
<dbReference type="InterPro" id="IPR011004">
    <property type="entry name" value="Trimer_LpxA-like_sf"/>
</dbReference>
<dbReference type="NCBIfam" id="TIGR00965">
    <property type="entry name" value="dapD"/>
    <property type="match status" value="1"/>
</dbReference>
<dbReference type="NCBIfam" id="NF008808">
    <property type="entry name" value="PRK11830.1"/>
    <property type="match status" value="1"/>
</dbReference>
<dbReference type="PANTHER" id="PTHR19136:SF52">
    <property type="entry name" value="2,3,4,5-TETRAHYDROPYRIDINE-2,6-DICARBOXYLATE N-SUCCINYLTRANSFERASE"/>
    <property type="match status" value="1"/>
</dbReference>
<dbReference type="PANTHER" id="PTHR19136">
    <property type="entry name" value="MOLYBDENUM COFACTOR GUANYLYLTRANSFERASE"/>
    <property type="match status" value="1"/>
</dbReference>
<dbReference type="Pfam" id="PF14602">
    <property type="entry name" value="Hexapep_2"/>
    <property type="match status" value="1"/>
</dbReference>
<dbReference type="Pfam" id="PF14805">
    <property type="entry name" value="THDPS_N_2"/>
    <property type="match status" value="1"/>
</dbReference>
<dbReference type="SUPFAM" id="SSF51161">
    <property type="entry name" value="Trimeric LpxA-like enzymes"/>
    <property type="match status" value="1"/>
</dbReference>
<dbReference type="PROSITE" id="PS00101">
    <property type="entry name" value="HEXAPEP_TRANSFERASES"/>
    <property type="match status" value="1"/>
</dbReference>
<reference key="1">
    <citation type="submission" date="2006-02" db="EMBL/GenBank/DDBJ databases">
        <title>Complete sequence of chromosome of Jannaschia sp. CCS1.</title>
        <authorList>
            <consortium name="US DOE Joint Genome Institute"/>
            <person name="Copeland A."/>
            <person name="Lucas S."/>
            <person name="Lapidus A."/>
            <person name="Barry K."/>
            <person name="Detter J.C."/>
            <person name="Glavina del Rio T."/>
            <person name="Hammon N."/>
            <person name="Israni S."/>
            <person name="Pitluck S."/>
            <person name="Brettin T."/>
            <person name="Bruce D."/>
            <person name="Han C."/>
            <person name="Tapia R."/>
            <person name="Gilna P."/>
            <person name="Chertkov O."/>
            <person name="Saunders E."/>
            <person name="Schmutz J."/>
            <person name="Larimer F."/>
            <person name="Land M."/>
            <person name="Kyrpides N."/>
            <person name="Lykidis A."/>
            <person name="Moran M.A."/>
            <person name="Belas R."/>
            <person name="Ye W."/>
            <person name="Buchan A."/>
            <person name="Gonzalez J.M."/>
            <person name="Schell M.A."/>
            <person name="Richardson P."/>
        </authorList>
    </citation>
    <scope>NUCLEOTIDE SEQUENCE [LARGE SCALE GENOMIC DNA]</scope>
    <source>
        <strain>CCS1</strain>
    </source>
</reference>
<proteinExistence type="inferred from homology"/>
<evidence type="ECO:0000255" key="1">
    <source>
        <dbReference type="HAMAP-Rule" id="MF_00811"/>
    </source>
</evidence>
<organism>
    <name type="scientific">Jannaschia sp. (strain CCS1)</name>
    <dbReference type="NCBI Taxonomy" id="290400"/>
    <lineage>
        <taxon>Bacteria</taxon>
        <taxon>Pseudomonadati</taxon>
        <taxon>Pseudomonadota</taxon>
        <taxon>Alphaproteobacteria</taxon>
        <taxon>Rhodobacterales</taxon>
        <taxon>Roseobacteraceae</taxon>
        <taxon>Jannaschia</taxon>
    </lineage>
</organism>
<name>DAPD_JANSC</name>